<name>TYSY_XANOR</name>
<accession>Q5GWB5</accession>
<feature type="chain" id="PRO_0000141047" description="Thymidylate synthase">
    <location>
        <begin position="1"/>
        <end position="264"/>
    </location>
</feature>
<feature type="active site" description="Nucleophile" evidence="1">
    <location>
        <position position="146"/>
    </location>
</feature>
<feature type="binding site" description="in other chain" evidence="1">
    <location>
        <position position="21"/>
    </location>
    <ligand>
        <name>dUMP</name>
        <dbReference type="ChEBI" id="CHEBI:246422"/>
        <note>ligand shared between dimeric partners</note>
    </ligand>
</feature>
<feature type="binding site" evidence="1">
    <location>
        <position position="51"/>
    </location>
    <ligand>
        <name>(6R)-5,10-methylene-5,6,7,8-tetrahydrofolate</name>
        <dbReference type="ChEBI" id="CHEBI:15636"/>
    </ligand>
</feature>
<feature type="binding site" evidence="1">
    <location>
        <begin position="126"/>
        <end position="127"/>
    </location>
    <ligand>
        <name>dUMP</name>
        <dbReference type="ChEBI" id="CHEBI:246422"/>
        <note>ligand shared between dimeric partners</note>
    </ligand>
</feature>
<feature type="binding site" description="in other chain" evidence="1">
    <location>
        <begin position="166"/>
        <end position="169"/>
    </location>
    <ligand>
        <name>dUMP</name>
        <dbReference type="ChEBI" id="CHEBI:246422"/>
        <note>ligand shared between dimeric partners</note>
    </ligand>
</feature>
<feature type="binding site" evidence="1">
    <location>
        <position position="169"/>
    </location>
    <ligand>
        <name>(6R)-5,10-methylene-5,6,7,8-tetrahydrofolate</name>
        <dbReference type="ChEBI" id="CHEBI:15636"/>
    </ligand>
</feature>
<feature type="binding site" description="in other chain" evidence="1">
    <location>
        <position position="177"/>
    </location>
    <ligand>
        <name>dUMP</name>
        <dbReference type="ChEBI" id="CHEBI:246422"/>
        <note>ligand shared between dimeric partners</note>
    </ligand>
</feature>
<feature type="binding site" description="in other chain" evidence="1">
    <location>
        <begin position="207"/>
        <end position="209"/>
    </location>
    <ligand>
        <name>dUMP</name>
        <dbReference type="ChEBI" id="CHEBI:246422"/>
        <note>ligand shared between dimeric partners</note>
    </ligand>
</feature>
<feature type="binding site" evidence="1">
    <location>
        <position position="263"/>
    </location>
    <ligand>
        <name>(6R)-5,10-methylene-5,6,7,8-tetrahydrofolate</name>
        <dbReference type="ChEBI" id="CHEBI:15636"/>
    </ligand>
</feature>
<protein>
    <recommendedName>
        <fullName evidence="1">Thymidylate synthase</fullName>
        <shortName evidence="1">TS</shortName>
        <shortName evidence="1">TSase</shortName>
        <ecNumber evidence="1">2.1.1.45</ecNumber>
    </recommendedName>
</protein>
<comment type="function">
    <text evidence="1">Catalyzes the reductive methylation of 2'-deoxyuridine-5'-monophosphate (dUMP) to 2'-deoxythymidine-5'-monophosphate (dTMP) while utilizing 5,10-methylenetetrahydrofolate (mTHF) as the methyl donor and reductant in the reaction, yielding dihydrofolate (DHF) as a by-product. This enzymatic reaction provides an intracellular de novo source of dTMP, an essential precursor for DNA biosynthesis.</text>
</comment>
<comment type="catalytic activity">
    <reaction evidence="1">
        <text>dUMP + (6R)-5,10-methylene-5,6,7,8-tetrahydrofolate = 7,8-dihydrofolate + dTMP</text>
        <dbReference type="Rhea" id="RHEA:12104"/>
        <dbReference type="ChEBI" id="CHEBI:15636"/>
        <dbReference type="ChEBI" id="CHEBI:57451"/>
        <dbReference type="ChEBI" id="CHEBI:63528"/>
        <dbReference type="ChEBI" id="CHEBI:246422"/>
        <dbReference type="EC" id="2.1.1.45"/>
    </reaction>
</comment>
<comment type="pathway">
    <text evidence="1">Pyrimidine metabolism; dTTP biosynthesis.</text>
</comment>
<comment type="subunit">
    <text evidence="1">Homodimer.</text>
</comment>
<comment type="subcellular location">
    <subcellularLocation>
        <location evidence="1">Cytoplasm</location>
    </subcellularLocation>
</comment>
<comment type="similarity">
    <text evidence="1">Belongs to the thymidylate synthase family. Bacterial-type ThyA subfamily.</text>
</comment>
<sequence length="264" mass="30105">MKPYLDLLQHVLEHGAEKSDRTGTGTRSVFGWQMRFDLNDGFPLVTTKKLHLRSIIHELLWFLQGDTNIGYLSDNQVRIWDEWADDNGDLGPVYGKQWRRWTGPDGVEIDQMQWLVDEIKRNPDSRRLVISAWNVGELPQMALMPCHSLFQFYVVNGKLSCQLYQRSGDIFLGVPFNIASYALLTHMVAQATGLGVGDFVHTLGDAHLYSNHFDQARKQLTRTPRALPTLRLNPEVTDLFAFRFEDIAIEGYDPHPAIKAPVAV</sequence>
<dbReference type="EC" id="2.1.1.45" evidence="1"/>
<dbReference type="EMBL" id="AE013598">
    <property type="protein sequence ID" value="AAW77006.1"/>
    <property type="molecule type" value="Genomic_DNA"/>
</dbReference>
<dbReference type="SMR" id="Q5GWB5"/>
<dbReference type="STRING" id="291331.XOO3752"/>
<dbReference type="KEGG" id="xoo:XOO3752"/>
<dbReference type="HOGENOM" id="CLU_021669_0_0_6"/>
<dbReference type="UniPathway" id="UPA00575"/>
<dbReference type="Proteomes" id="UP000006735">
    <property type="component" value="Chromosome"/>
</dbReference>
<dbReference type="GO" id="GO:0005829">
    <property type="term" value="C:cytosol"/>
    <property type="evidence" value="ECO:0007669"/>
    <property type="project" value="TreeGrafter"/>
</dbReference>
<dbReference type="GO" id="GO:0004799">
    <property type="term" value="F:thymidylate synthase activity"/>
    <property type="evidence" value="ECO:0007669"/>
    <property type="project" value="UniProtKB-UniRule"/>
</dbReference>
<dbReference type="GO" id="GO:0006231">
    <property type="term" value="P:dTMP biosynthetic process"/>
    <property type="evidence" value="ECO:0007669"/>
    <property type="project" value="UniProtKB-UniRule"/>
</dbReference>
<dbReference type="GO" id="GO:0006235">
    <property type="term" value="P:dTTP biosynthetic process"/>
    <property type="evidence" value="ECO:0007669"/>
    <property type="project" value="UniProtKB-UniRule"/>
</dbReference>
<dbReference type="GO" id="GO:0032259">
    <property type="term" value="P:methylation"/>
    <property type="evidence" value="ECO:0007669"/>
    <property type="project" value="UniProtKB-KW"/>
</dbReference>
<dbReference type="CDD" id="cd00351">
    <property type="entry name" value="TS_Pyrimidine_HMase"/>
    <property type="match status" value="1"/>
</dbReference>
<dbReference type="FunFam" id="3.30.572.10:FF:000001">
    <property type="entry name" value="Thymidylate synthase"/>
    <property type="match status" value="1"/>
</dbReference>
<dbReference type="Gene3D" id="3.30.572.10">
    <property type="entry name" value="Thymidylate synthase/dCMP hydroxymethylase domain"/>
    <property type="match status" value="1"/>
</dbReference>
<dbReference type="HAMAP" id="MF_00008">
    <property type="entry name" value="Thymidy_synth_bact"/>
    <property type="match status" value="1"/>
</dbReference>
<dbReference type="InterPro" id="IPR045097">
    <property type="entry name" value="Thymidate_synth/dCMP_Mease"/>
</dbReference>
<dbReference type="InterPro" id="IPR023451">
    <property type="entry name" value="Thymidate_synth/dCMP_Mease_dom"/>
</dbReference>
<dbReference type="InterPro" id="IPR036926">
    <property type="entry name" value="Thymidate_synth/dCMP_Mease_sf"/>
</dbReference>
<dbReference type="InterPro" id="IPR000398">
    <property type="entry name" value="Thymidylate_synthase"/>
</dbReference>
<dbReference type="InterPro" id="IPR020940">
    <property type="entry name" value="Thymidylate_synthase_AS"/>
</dbReference>
<dbReference type="NCBIfam" id="NF002497">
    <property type="entry name" value="PRK01827.1-3"/>
    <property type="match status" value="1"/>
</dbReference>
<dbReference type="NCBIfam" id="NF002499">
    <property type="entry name" value="PRK01827.1-5"/>
    <property type="match status" value="1"/>
</dbReference>
<dbReference type="NCBIfam" id="TIGR03284">
    <property type="entry name" value="thym_sym"/>
    <property type="match status" value="2"/>
</dbReference>
<dbReference type="PANTHER" id="PTHR11548:SF9">
    <property type="entry name" value="THYMIDYLATE SYNTHASE"/>
    <property type="match status" value="1"/>
</dbReference>
<dbReference type="PANTHER" id="PTHR11548">
    <property type="entry name" value="THYMIDYLATE SYNTHASE 1"/>
    <property type="match status" value="1"/>
</dbReference>
<dbReference type="Pfam" id="PF00303">
    <property type="entry name" value="Thymidylat_synt"/>
    <property type="match status" value="1"/>
</dbReference>
<dbReference type="PRINTS" id="PR00108">
    <property type="entry name" value="THYMDSNTHASE"/>
</dbReference>
<dbReference type="SUPFAM" id="SSF55831">
    <property type="entry name" value="Thymidylate synthase/dCMP hydroxymethylase"/>
    <property type="match status" value="1"/>
</dbReference>
<dbReference type="PROSITE" id="PS00091">
    <property type="entry name" value="THYMIDYLATE_SYNTHASE"/>
    <property type="match status" value="1"/>
</dbReference>
<keyword id="KW-0963">Cytoplasm</keyword>
<keyword id="KW-0489">Methyltransferase</keyword>
<keyword id="KW-0545">Nucleotide biosynthesis</keyword>
<keyword id="KW-1185">Reference proteome</keyword>
<keyword id="KW-0808">Transferase</keyword>
<gene>
    <name evidence="1" type="primary">thyA</name>
    <name type="ordered locus">XOO3752</name>
</gene>
<organism>
    <name type="scientific">Xanthomonas oryzae pv. oryzae (strain KACC10331 / KXO85)</name>
    <dbReference type="NCBI Taxonomy" id="291331"/>
    <lineage>
        <taxon>Bacteria</taxon>
        <taxon>Pseudomonadati</taxon>
        <taxon>Pseudomonadota</taxon>
        <taxon>Gammaproteobacteria</taxon>
        <taxon>Lysobacterales</taxon>
        <taxon>Lysobacteraceae</taxon>
        <taxon>Xanthomonas</taxon>
    </lineage>
</organism>
<evidence type="ECO:0000255" key="1">
    <source>
        <dbReference type="HAMAP-Rule" id="MF_00008"/>
    </source>
</evidence>
<proteinExistence type="inferred from homology"/>
<reference key="1">
    <citation type="journal article" date="2005" name="Nucleic Acids Res.">
        <title>The genome sequence of Xanthomonas oryzae pathovar oryzae KACC10331, the bacterial blight pathogen of rice.</title>
        <authorList>
            <person name="Lee B.-M."/>
            <person name="Park Y.-J."/>
            <person name="Park D.-S."/>
            <person name="Kang H.-W."/>
            <person name="Kim J.-G."/>
            <person name="Song E.-S."/>
            <person name="Park I.-C."/>
            <person name="Yoon U.-H."/>
            <person name="Hahn J.-H."/>
            <person name="Koo B.-S."/>
            <person name="Lee G.-B."/>
            <person name="Kim H."/>
            <person name="Park H.-S."/>
            <person name="Yoon K.-O."/>
            <person name="Kim J.-H."/>
            <person name="Jung C.-H."/>
            <person name="Koh N.-H."/>
            <person name="Seo J.-S."/>
            <person name="Go S.-J."/>
        </authorList>
    </citation>
    <scope>NUCLEOTIDE SEQUENCE [LARGE SCALE GENOMIC DNA]</scope>
    <source>
        <strain>KACC10331 / KXO85</strain>
    </source>
</reference>